<sequence>MPDPYAWLQNSLLTIHRADWYRSVQAIQGRAGASVVLGGQEVINFASNDYLGLAGDERLIAAAVAATQEFGTGSTGSRLLSGHRELHGQLEKAIASWKQTEDALVFSSGYLANIGAIAALVGKRDLILSDQYNHSSLKNGAILSGATVREYSHCQVGELKTQLLEQRQNYRRCLILTDSVFSMDGDLCPLPDLLDLAEEFSCMLLVDEAHATGVMGETGAGCVEHFGCTGRQLIQIGTLSKALGSLGGYVTGSHNLIDYLRNRAPSWIYTTGLSPADTAAALAAINIAQQEPQHRMQLWHNVNYLRELLQKIPNLKLLPSASPILCFQLSSPSEALQVGKQLKQAGIFAPAIRPPTVPTSRIRISLMATHKASHIEKLVAVLQGLN</sequence>
<reference key="1">
    <citation type="journal article" date="2001" name="DNA Res.">
        <title>Complete genomic sequence of the filamentous nitrogen-fixing cyanobacterium Anabaena sp. strain PCC 7120.</title>
        <authorList>
            <person name="Kaneko T."/>
            <person name="Nakamura Y."/>
            <person name="Wolk C.P."/>
            <person name="Kuritz T."/>
            <person name="Sasamoto S."/>
            <person name="Watanabe A."/>
            <person name="Iriguchi M."/>
            <person name="Ishikawa A."/>
            <person name="Kawashima K."/>
            <person name="Kimura T."/>
            <person name="Kishida Y."/>
            <person name="Kohara M."/>
            <person name="Matsumoto M."/>
            <person name="Matsuno A."/>
            <person name="Muraki A."/>
            <person name="Nakazaki N."/>
            <person name="Shimpo S."/>
            <person name="Sugimoto M."/>
            <person name="Takazawa M."/>
            <person name="Yamada M."/>
            <person name="Yasuda M."/>
            <person name="Tabata S."/>
        </authorList>
    </citation>
    <scope>NUCLEOTIDE SEQUENCE [LARGE SCALE GENOMIC DNA]</scope>
    <source>
        <strain>PCC 7120 / SAG 25.82 / UTEX 2576</strain>
    </source>
</reference>
<name>BIOF_NOSS1</name>
<gene>
    <name type="primary">bioF</name>
    <name type="ordered locus">all0374</name>
</gene>
<comment type="function">
    <text evidence="1">Catalyzes the decarboxylative condensation of pimeloyl-[acyl-carrier protein] and L-alanine to produce 8-amino-7-oxononanoate (AON), [acyl-carrier protein], and carbon dioxide.</text>
</comment>
<comment type="catalytic activity">
    <reaction>
        <text>6-carboxyhexanoyl-[ACP] + L-alanine + H(+) = (8S)-8-amino-7-oxononanoate + holo-[ACP] + CO2</text>
        <dbReference type="Rhea" id="RHEA:42288"/>
        <dbReference type="Rhea" id="RHEA-COMP:9685"/>
        <dbReference type="Rhea" id="RHEA-COMP:9955"/>
        <dbReference type="ChEBI" id="CHEBI:15378"/>
        <dbReference type="ChEBI" id="CHEBI:16526"/>
        <dbReference type="ChEBI" id="CHEBI:57972"/>
        <dbReference type="ChEBI" id="CHEBI:64479"/>
        <dbReference type="ChEBI" id="CHEBI:78846"/>
        <dbReference type="ChEBI" id="CHEBI:149468"/>
        <dbReference type="EC" id="2.3.1.47"/>
    </reaction>
</comment>
<comment type="cofactor">
    <cofactor evidence="1">
        <name>pyridoxal 5'-phosphate</name>
        <dbReference type="ChEBI" id="CHEBI:597326"/>
    </cofactor>
</comment>
<comment type="pathway">
    <text>Cofactor biosynthesis; biotin biosynthesis.</text>
</comment>
<comment type="subunit">
    <text evidence="1">Homodimer.</text>
</comment>
<comment type="similarity">
    <text evidence="2">Belongs to the class-II pyridoxal-phosphate-dependent aminotransferase family. BioF subfamily.</text>
</comment>
<evidence type="ECO:0000250" key="1"/>
<evidence type="ECO:0000305" key="2"/>
<protein>
    <recommendedName>
        <fullName>Putative 8-amino-7-oxononanoate synthase</fullName>
        <shortName>AONS</shortName>
        <ecNumber>2.3.1.47</ecNumber>
    </recommendedName>
    <alternativeName>
        <fullName>7-keto-8-amino-pelargonic acid synthase</fullName>
        <shortName>7-KAP synthase</shortName>
    </alternativeName>
    <alternativeName>
        <fullName>8-amino-7-ketopelargonate synthase</fullName>
    </alternativeName>
</protein>
<keyword id="KW-0093">Biotin biosynthesis</keyword>
<keyword id="KW-0663">Pyridoxal phosphate</keyword>
<keyword id="KW-1185">Reference proteome</keyword>
<keyword id="KW-0808">Transferase</keyword>
<organism>
    <name type="scientific">Nostoc sp. (strain PCC 7120 / SAG 25.82 / UTEX 2576)</name>
    <dbReference type="NCBI Taxonomy" id="103690"/>
    <lineage>
        <taxon>Bacteria</taxon>
        <taxon>Bacillati</taxon>
        <taxon>Cyanobacteriota</taxon>
        <taxon>Cyanophyceae</taxon>
        <taxon>Nostocales</taxon>
        <taxon>Nostocaceae</taxon>
        <taxon>Nostoc</taxon>
    </lineage>
</organism>
<feature type="chain" id="PRO_0000380898" description="Putative 8-amino-7-oxononanoate synthase">
    <location>
        <begin position="1"/>
        <end position="386"/>
    </location>
</feature>
<feature type="binding site" evidence="1">
    <location>
        <position position="22"/>
    </location>
    <ligand>
        <name>substrate</name>
    </ligand>
</feature>
<feature type="binding site" evidence="1">
    <location>
        <begin position="109"/>
        <end position="110"/>
    </location>
    <ligand>
        <name>pyridoxal 5'-phosphate</name>
        <dbReference type="ChEBI" id="CHEBI:597326"/>
    </ligand>
</feature>
<feature type="binding site" evidence="1">
    <location>
        <position position="134"/>
    </location>
    <ligand>
        <name>substrate</name>
    </ligand>
</feature>
<feature type="binding site" evidence="1">
    <location>
        <position position="182"/>
    </location>
    <ligand>
        <name>pyridoxal 5'-phosphate</name>
        <dbReference type="ChEBI" id="CHEBI:597326"/>
    </ligand>
</feature>
<feature type="binding site" evidence="1">
    <location>
        <begin position="207"/>
        <end position="210"/>
    </location>
    <ligand>
        <name>pyridoxal 5'-phosphate</name>
        <dbReference type="ChEBI" id="CHEBI:597326"/>
    </ligand>
</feature>
<feature type="binding site" evidence="1">
    <location>
        <begin position="238"/>
        <end position="241"/>
    </location>
    <ligand>
        <name>pyridoxal 5'-phosphate</name>
        <dbReference type="ChEBI" id="CHEBI:597326"/>
    </ligand>
</feature>
<feature type="binding site" evidence="1">
    <location>
        <position position="356"/>
    </location>
    <ligand>
        <name>substrate</name>
    </ligand>
</feature>
<feature type="modified residue" description="N6-(pyridoxal phosphate)lysine" evidence="1">
    <location>
        <position position="241"/>
    </location>
</feature>
<proteinExistence type="inferred from homology"/>
<dbReference type="EC" id="2.3.1.47"/>
<dbReference type="EMBL" id="BA000019">
    <property type="protein sequence ID" value="BAB72332.1"/>
    <property type="molecule type" value="Genomic_DNA"/>
</dbReference>
<dbReference type="PIR" id="AE1853">
    <property type="entry name" value="AE1853"/>
</dbReference>
<dbReference type="RefSeq" id="WP_010994550.1">
    <property type="nucleotide sequence ID" value="NZ_RSCN01000017.1"/>
</dbReference>
<dbReference type="SMR" id="Q8YZT3"/>
<dbReference type="STRING" id="103690.gene:10492382"/>
<dbReference type="KEGG" id="ana:all0374"/>
<dbReference type="eggNOG" id="COG0156">
    <property type="taxonomic scope" value="Bacteria"/>
</dbReference>
<dbReference type="OrthoDB" id="9807157at2"/>
<dbReference type="UniPathway" id="UPA00078"/>
<dbReference type="Proteomes" id="UP000002483">
    <property type="component" value="Chromosome"/>
</dbReference>
<dbReference type="GO" id="GO:0008710">
    <property type="term" value="F:8-amino-7-oxononanoate synthase activity"/>
    <property type="evidence" value="ECO:0007669"/>
    <property type="project" value="UniProtKB-EC"/>
</dbReference>
<dbReference type="GO" id="GO:0030170">
    <property type="term" value="F:pyridoxal phosphate binding"/>
    <property type="evidence" value="ECO:0007669"/>
    <property type="project" value="InterPro"/>
</dbReference>
<dbReference type="GO" id="GO:0009102">
    <property type="term" value="P:biotin biosynthetic process"/>
    <property type="evidence" value="ECO:0007669"/>
    <property type="project" value="UniProtKB-UniPathway"/>
</dbReference>
<dbReference type="Gene3D" id="3.90.1150.10">
    <property type="entry name" value="Aspartate Aminotransferase, domain 1"/>
    <property type="match status" value="1"/>
</dbReference>
<dbReference type="Gene3D" id="3.40.640.10">
    <property type="entry name" value="Type I PLP-dependent aspartate aminotransferase-like (Major domain)"/>
    <property type="match status" value="1"/>
</dbReference>
<dbReference type="InterPro" id="IPR001917">
    <property type="entry name" value="Aminotrans_II_pyridoxalP_BS"/>
</dbReference>
<dbReference type="InterPro" id="IPR004839">
    <property type="entry name" value="Aminotransferase_I/II_large"/>
</dbReference>
<dbReference type="InterPro" id="IPR050087">
    <property type="entry name" value="AON_synthase_class-II"/>
</dbReference>
<dbReference type="InterPro" id="IPR004723">
    <property type="entry name" value="AONS_Archaea/Proteobacteria"/>
</dbReference>
<dbReference type="InterPro" id="IPR015424">
    <property type="entry name" value="PyrdxlP-dep_Trfase"/>
</dbReference>
<dbReference type="InterPro" id="IPR015421">
    <property type="entry name" value="PyrdxlP-dep_Trfase_major"/>
</dbReference>
<dbReference type="InterPro" id="IPR015422">
    <property type="entry name" value="PyrdxlP-dep_Trfase_small"/>
</dbReference>
<dbReference type="NCBIfam" id="TIGR00858">
    <property type="entry name" value="bioF"/>
    <property type="match status" value="1"/>
</dbReference>
<dbReference type="PANTHER" id="PTHR13693:SF100">
    <property type="entry name" value="8-AMINO-7-OXONONANOATE SYNTHASE"/>
    <property type="match status" value="1"/>
</dbReference>
<dbReference type="PANTHER" id="PTHR13693">
    <property type="entry name" value="CLASS II AMINOTRANSFERASE/8-AMINO-7-OXONONANOATE SYNTHASE"/>
    <property type="match status" value="1"/>
</dbReference>
<dbReference type="Pfam" id="PF00155">
    <property type="entry name" value="Aminotran_1_2"/>
    <property type="match status" value="1"/>
</dbReference>
<dbReference type="SUPFAM" id="SSF53383">
    <property type="entry name" value="PLP-dependent transferases"/>
    <property type="match status" value="1"/>
</dbReference>
<dbReference type="PROSITE" id="PS00599">
    <property type="entry name" value="AA_TRANSFER_CLASS_2"/>
    <property type="match status" value="1"/>
</dbReference>
<accession>Q8YZT3</accession>